<feature type="chain" id="PRO_1000129295" description="Adenosylhomocysteinase">
    <location>
        <begin position="1"/>
        <end position="469"/>
    </location>
</feature>
<feature type="binding site" evidence="1">
    <location>
        <position position="63"/>
    </location>
    <ligand>
        <name>substrate</name>
    </ligand>
</feature>
<feature type="binding site" evidence="1">
    <location>
        <position position="139"/>
    </location>
    <ligand>
        <name>substrate</name>
    </ligand>
</feature>
<feature type="binding site" evidence="1">
    <location>
        <position position="164"/>
    </location>
    <ligand>
        <name>substrate</name>
    </ligand>
</feature>
<feature type="binding site" evidence="1">
    <location>
        <begin position="165"/>
        <end position="167"/>
    </location>
    <ligand>
        <name>NAD(+)</name>
        <dbReference type="ChEBI" id="CHEBI:57540"/>
    </ligand>
</feature>
<feature type="binding site" evidence="1">
    <location>
        <position position="194"/>
    </location>
    <ligand>
        <name>substrate</name>
    </ligand>
</feature>
<feature type="binding site" evidence="1">
    <location>
        <position position="198"/>
    </location>
    <ligand>
        <name>substrate</name>
    </ligand>
</feature>
<feature type="binding site" evidence="1">
    <location>
        <position position="199"/>
    </location>
    <ligand>
        <name>NAD(+)</name>
        <dbReference type="ChEBI" id="CHEBI:57540"/>
    </ligand>
</feature>
<feature type="binding site" evidence="1">
    <location>
        <begin position="228"/>
        <end position="233"/>
    </location>
    <ligand>
        <name>NAD(+)</name>
        <dbReference type="ChEBI" id="CHEBI:57540"/>
    </ligand>
</feature>
<feature type="binding site" evidence="1">
    <location>
        <position position="251"/>
    </location>
    <ligand>
        <name>NAD(+)</name>
        <dbReference type="ChEBI" id="CHEBI:57540"/>
    </ligand>
</feature>
<feature type="binding site" evidence="1">
    <location>
        <position position="300"/>
    </location>
    <ligand>
        <name>NAD(+)</name>
        <dbReference type="ChEBI" id="CHEBI:57540"/>
    </ligand>
</feature>
<feature type="binding site" evidence="1">
    <location>
        <begin position="321"/>
        <end position="323"/>
    </location>
    <ligand>
        <name>NAD(+)</name>
        <dbReference type="ChEBI" id="CHEBI:57540"/>
    </ligand>
</feature>
<feature type="binding site" evidence="1">
    <location>
        <position position="375"/>
    </location>
    <ligand>
        <name>NAD(+)</name>
        <dbReference type="ChEBI" id="CHEBI:57540"/>
    </ligand>
</feature>
<name>SAHH_PSEA8</name>
<dbReference type="EC" id="3.13.2.1" evidence="1"/>
<dbReference type="EMBL" id="FM209186">
    <property type="protein sequence ID" value="CAW25157.1"/>
    <property type="molecule type" value="Genomic_DNA"/>
</dbReference>
<dbReference type="RefSeq" id="WP_003099900.1">
    <property type="nucleotide sequence ID" value="NC_011770.1"/>
</dbReference>
<dbReference type="PDB" id="8AZF">
    <property type="method" value="X-ray"/>
    <property type="resolution" value="1.41 A"/>
    <property type="chains" value="A/C=1-469"/>
</dbReference>
<dbReference type="PDBsum" id="8AZF"/>
<dbReference type="SMR" id="B7V419"/>
<dbReference type="KEGG" id="pag:PLES_04301"/>
<dbReference type="HOGENOM" id="CLU_025194_2_1_6"/>
<dbReference type="UniPathway" id="UPA00314">
    <property type="reaction ID" value="UER00076"/>
</dbReference>
<dbReference type="GO" id="GO:0005829">
    <property type="term" value="C:cytosol"/>
    <property type="evidence" value="ECO:0007669"/>
    <property type="project" value="TreeGrafter"/>
</dbReference>
<dbReference type="GO" id="GO:0004013">
    <property type="term" value="F:adenosylhomocysteinase activity"/>
    <property type="evidence" value="ECO:0007669"/>
    <property type="project" value="UniProtKB-UniRule"/>
</dbReference>
<dbReference type="GO" id="GO:0071269">
    <property type="term" value="P:L-homocysteine biosynthetic process"/>
    <property type="evidence" value="ECO:0007669"/>
    <property type="project" value="UniProtKB-UniRule"/>
</dbReference>
<dbReference type="GO" id="GO:0006730">
    <property type="term" value="P:one-carbon metabolic process"/>
    <property type="evidence" value="ECO:0007669"/>
    <property type="project" value="UniProtKB-KW"/>
</dbReference>
<dbReference type="GO" id="GO:0033353">
    <property type="term" value="P:S-adenosylmethionine cycle"/>
    <property type="evidence" value="ECO:0007669"/>
    <property type="project" value="TreeGrafter"/>
</dbReference>
<dbReference type="CDD" id="cd00401">
    <property type="entry name" value="SAHH"/>
    <property type="match status" value="1"/>
</dbReference>
<dbReference type="FunFam" id="3.40.50.1480:FF:000006">
    <property type="entry name" value="Adenosylhomocysteinase"/>
    <property type="match status" value="1"/>
</dbReference>
<dbReference type="FunFam" id="3.40.50.1480:FF:000007">
    <property type="entry name" value="Adenosylhomocysteinase"/>
    <property type="match status" value="1"/>
</dbReference>
<dbReference type="FunFam" id="3.40.50.1480:FF:000013">
    <property type="entry name" value="Adenosylhomocysteinase"/>
    <property type="match status" value="1"/>
</dbReference>
<dbReference type="FunFam" id="3.40.50.720:FF:000155">
    <property type="entry name" value="Adenosylhomocysteinase"/>
    <property type="match status" value="1"/>
</dbReference>
<dbReference type="Gene3D" id="3.40.50.1480">
    <property type="entry name" value="Adenosylhomocysteinase-like"/>
    <property type="match status" value="3"/>
</dbReference>
<dbReference type="Gene3D" id="3.40.50.720">
    <property type="entry name" value="NAD(P)-binding Rossmann-like Domain"/>
    <property type="match status" value="1"/>
</dbReference>
<dbReference type="HAMAP" id="MF_00563">
    <property type="entry name" value="AdoHcyase"/>
    <property type="match status" value="1"/>
</dbReference>
<dbReference type="InterPro" id="IPR042172">
    <property type="entry name" value="Adenosylhomocyst_ase-like_sf"/>
</dbReference>
<dbReference type="InterPro" id="IPR000043">
    <property type="entry name" value="Adenosylhomocysteinase-like"/>
</dbReference>
<dbReference type="InterPro" id="IPR015878">
    <property type="entry name" value="Ado_hCys_hydrolase_NAD-bd"/>
</dbReference>
<dbReference type="InterPro" id="IPR036291">
    <property type="entry name" value="NAD(P)-bd_dom_sf"/>
</dbReference>
<dbReference type="InterPro" id="IPR020082">
    <property type="entry name" value="S-Ado-L-homoCys_hydrolase_CS"/>
</dbReference>
<dbReference type="NCBIfam" id="TIGR00936">
    <property type="entry name" value="ahcY"/>
    <property type="match status" value="1"/>
</dbReference>
<dbReference type="NCBIfam" id="NF004005">
    <property type="entry name" value="PRK05476.2-3"/>
    <property type="match status" value="1"/>
</dbReference>
<dbReference type="PANTHER" id="PTHR23420">
    <property type="entry name" value="ADENOSYLHOMOCYSTEINASE"/>
    <property type="match status" value="1"/>
</dbReference>
<dbReference type="PANTHER" id="PTHR23420:SF0">
    <property type="entry name" value="ADENOSYLHOMOCYSTEINASE"/>
    <property type="match status" value="1"/>
</dbReference>
<dbReference type="Pfam" id="PF05221">
    <property type="entry name" value="AdoHcyase"/>
    <property type="match status" value="1"/>
</dbReference>
<dbReference type="Pfam" id="PF00670">
    <property type="entry name" value="AdoHcyase_NAD"/>
    <property type="match status" value="1"/>
</dbReference>
<dbReference type="PIRSF" id="PIRSF001109">
    <property type="entry name" value="Ad_hcy_hydrolase"/>
    <property type="match status" value="1"/>
</dbReference>
<dbReference type="SMART" id="SM00996">
    <property type="entry name" value="AdoHcyase"/>
    <property type="match status" value="1"/>
</dbReference>
<dbReference type="SMART" id="SM00997">
    <property type="entry name" value="AdoHcyase_NAD"/>
    <property type="match status" value="1"/>
</dbReference>
<dbReference type="SUPFAM" id="SSF52283">
    <property type="entry name" value="Formate/glycerate dehydrogenase catalytic domain-like"/>
    <property type="match status" value="1"/>
</dbReference>
<dbReference type="SUPFAM" id="SSF51735">
    <property type="entry name" value="NAD(P)-binding Rossmann-fold domains"/>
    <property type="match status" value="1"/>
</dbReference>
<dbReference type="PROSITE" id="PS00738">
    <property type="entry name" value="ADOHCYASE_1"/>
    <property type="match status" value="1"/>
</dbReference>
<dbReference type="PROSITE" id="PS00739">
    <property type="entry name" value="ADOHCYASE_2"/>
    <property type="match status" value="1"/>
</dbReference>
<proteinExistence type="evidence at protein level"/>
<sequence>MSAVMTPAGFTDYKVADITLAAWGRRELIIAESEMPALMGLRRKYAGQQPLKGAKILGCIHMTIQTGVLIETLVALGAEVRWSSCNIFSTQDQAAAAIAAAGIPVFAWKGETEEEYEWCIEQTILKDGQPWDANMVLDDGGDLTEILHKKYPQMLERIHGITEETTTGVHRLLDMLKNGTLKVPAINVNDSVTKSKNDNKYGCRHSLNDAIKRGTDHLLSGKQALVIGYGDVGKGSSQSLRQEGMIVKVAEVDPICAMQACMDGFEVVSPYKNGINDGTEASIDAALLGKIDLIVTTTGNVNVCDANMLKALKKRAVVCNIGHFDNEIDTAFMRKNWAWEEVKPQVHKIHRTGKDGFDAHNDDYLILLAEGRLVNLGNATGHPSRIMDGSFANQVLAQIHLFEQKYADLPAAEKAKRLSVEVLPKKLDEEVALEMVKGFGGVVTQLTPKQAEYIGVSVEGPFKPDTYRY</sequence>
<comment type="function">
    <text evidence="1">May play a key role in the regulation of the intracellular concentration of adenosylhomocysteine.</text>
</comment>
<comment type="catalytic activity">
    <reaction evidence="1">
        <text>S-adenosyl-L-homocysteine + H2O = L-homocysteine + adenosine</text>
        <dbReference type="Rhea" id="RHEA:21708"/>
        <dbReference type="ChEBI" id="CHEBI:15377"/>
        <dbReference type="ChEBI" id="CHEBI:16335"/>
        <dbReference type="ChEBI" id="CHEBI:57856"/>
        <dbReference type="ChEBI" id="CHEBI:58199"/>
        <dbReference type="EC" id="3.13.2.1"/>
    </reaction>
</comment>
<comment type="cofactor">
    <cofactor evidence="1">
        <name>NAD(+)</name>
        <dbReference type="ChEBI" id="CHEBI:57540"/>
    </cofactor>
    <text evidence="1">Binds 1 NAD(+) per subunit.</text>
</comment>
<comment type="pathway">
    <text evidence="1">Amino-acid biosynthesis; L-homocysteine biosynthesis; L-homocysteine from S-adenosyl-L-homocysteine: step 1/1.</text>
</comment>
<comment type="subcellular location">
    <subcellularLocation>
        <location evidence="1">Cytoplasm</location>
    </subcellularLocation>
</comment>
<comment type="similarity">
    <text evidence="1">Belongs to the adenosylhomocysteinase family.</text>
</comment>
<accession>B7V419</accession>
<keyword id="KW-0002">3D-structure</keyword>
<keyword id="KW-0963">Cytoplasm</keyword>
<keyword id="KW-0378">Hydrolase</keyword>
<keyword id="KW-0520">NAD</keyword>
<keyword id="KW-0554">One-carbon metabolism</keyword>
<protein>
    <recommendedName>
        <fullName evidence="1">Adenosylhomocysteinase</fullName>
        <ecNumber evidence="1">3.13.2.1</ecNumber>
    </recommendedName>
    <alternativeName>
        <fullName evidence="1">S-adenosyl-L-homocysteine hydrolase</fullName>
        <shortName evidence="1">AdoHcyase</shortName>
    </alternativeName>
</protein>
<reference key="1">
    <citation type="journal article" date="2009" name="Genome Res.">
        <title>Newly introduced genomic prophage islands are critical determinants of in vivo competitiveness in the Liverpool epidemic strain of Pseudomonas aeruginosa.</title>
        <authorList>
            <person name="Winstanley C."/>
            <person name="Langille M.G.I."/>
            <person name="Fothergill J.L."/>
            <person name="Kukavica-Ibrulj I."/>
            <person name="Paradis-Bleau C."/>
            <person name="Sanschagrin F."/>
            <person name="Thomson N.R."/>
            <person name="Winsor G.L."/>
            <person name="Quail M.A."/>
            <person name="Lennard N."/>
            <person name="Bignell A."/>
            <person name="Clarke L."/>
            <person name="Seeger K."/>
            <person name="Saunders D."/>
            <person name="Harris D."/>
            <person name="Parkhill J."/>
            <person name="Hancock R.E.W."/>
            <person name="Brinkman F.S.L."/>
            <person name="Levesque R.C."/>
        </authorList>
    </citation>
    <scope>NUCLEOTIDE SEQUENCE [LARGE SCALE GENOMIC DNA]</scope>
    <source>
        <strain>LESB58</strain>
    </source>
</reference>
<organism>
    <name type="scientific">Pseudomonas aeruginosa (strain LESB58)</name>
    <dbReference type="NCBI Taxonomy" id="557722"/>
    <lineage>
        <taxon>Bacteria</taxon>
        <taxon>Pseudomonadati</taxon>
        <taxon>Pseudomonadota</taxon>
        <taxon>Gammaproteobacteria</taxon>
        <taxon>Pseudomonadales</taxon>
        <taxon>Pseudomonadaceae</taxon>
        <taxon>Pseudomonas</taxon>
    </lineage>
</organism>
<gene>
    <name evidence="1" type="primary">ahcY</name>
    <name type="ordered locus">PLES_04301</name>
</gene>
<evidence type="ECO:0000255" key="1">
    <source>
        <dbReference type="HAMAP-Rule" id="MF_00563"/>
    </source>
</evidence>